<comment type="function">
    <text evidence="1 2">Bifunctional enzyme with both catalase and broad-spectrum peroxidase activity.</text>
</comment>
<comment type="catalytic activity">
    <reaction evidence="1">
        <text>H2O2 + AH2 = A + 2 H2O</text>
        <dbReference type="Rhea" id="RHEA:30275"/>
        <dbReference type="ChEBI" id="CHEBI:13193"/>
        <dbReference type="ChEBI" id="CHEBI:15377"/>
        <dbReference type="ChEBI" id="CHEBI:16240"/>
        <dbReference type="ChEBI" id="CHEBI:17499"/>
        <dbReference type="EC" id="1.11.1.21"/>
    </reaction>
</comment>
<comment type="catalytic activity">
    <reaction evidence="1">
        <text>2 H2O2 = O2 + 2 H2O</text>
        <dbReference type="Rhea" id="RHEA:20309"/>
        <dbReference type="ChEBI" id="CHEBI:15377"/>
        <dbReference type="ChEBI" id="CHEBI:15379"/>
        <dbReference type="ChEBI" id="CHEBI:16240"/>
        <dbReference type="EC" id="1.11.1.21"/>
    </reaction>
</comment>
<comment type="cofactor">
    <cofactor evidence="1">
        <name>heme b</name>
        <dbReference type="ChEBI" id="CHEBI:60344"/>
    </cofactor>
    <text evidence="1">Binds 1 heme b (iron(II)-protoporphyrin IX) group per dimer.</text>
</comment>
<comment type="subunit">
    <text evidence="1">Homodimer or homotetramer.</text>
</comment>
<comment type="subcellular location">
    <subcellularLocation>
        <location evidence="2">Periplasm</location>
    </subcellularLocation>
</comment>
<comment type="PTM">
    <text evidence="1">Formation of the three residue Trp-Tyr-Met cross-link is important for the catalase, but not the peroxidase activity of the enzyme.</text>
</comment>
<comment type="similarity">
    <text evidence="1">Belongs to the peroxidase family. Peroxidase/catalase subfamily.</text>
</comment>
<name>KATG2_ECO57</name>
<keyword id="KW-0349">Heme</keyword>
<keyword id="KW-0376">Hydrogen peroxide</keyword>
<keyword id="KW-0408">Iron</keyword>
<keyword id="KW-0479">Metal-binding</keyword>
<keyword id="KW-0560">Oxidoreductase</keyword>
<keyword id="KW-0574">Periplasm</keyword>
<keyword id="KW-0575">Peroxidase</keyword>
<keyword id="KW-0614">Plasmid</keyword>
<keyword id="KW-1185">Reference proteome</keyword>
<keyword id="KW-0732">Signal</keyword>
<dbReference type="EC" id="1.11.1.21" evidence="1"/>
<dbReference type="EMBL" id="X89017">
    <property type="protein sequence ID" value="CAA61429.1"/>
    <property type="molecule type" value="Genomic_DNA"/>
</dbReference>
<dbReference type="EMBL" id="AF074613">
    <property type="protein sequence ID" value="AAC70085.1"/>
    <property type="molecule type" value="Genomic_DNA"/>
</dbReference>
<dbReference type="EMBL" id="AB011549">
    <property type="protein sequence ID" value="BAA31832.1"/>
    <property type="molecule type" value="Genomic_DNA"/>
</dbReference>
<dbReference type="PIR" id="T00313">
    <property type="entry name" value="T00313"/>
</dbReference>
<dbReference type="RefSeq" id="WP_000592771.1">
    <property type="nucleotide sequence ID" value="NZ_VOAI01000049.1"/>
</dbReference>
<dbReference type="SMR" id="Q7BSW8"/>
<dbReference type="PeroxiBase" id="2386">
    <property type="entry name" value="EcoH7CP02_EDL933"/>
</dbReference>
<dbReference type="KEGG" id="ece:Z_L7017"/>
<dbReference type="PATRIC" id="fig|83334.175.peg.3529"/>
<dbReference type="eggNOG" id="COG0376">
    <property type="taxonomic scope" value="Bacteria"/>
</dbReference>
<dbReference type="HOGENOM" id="CLU_025424_2_0_6"/>
<dbReference type="OMA" id="EIFWGPE"/>
<dbReference type="Proteomes" id="UP000000558">
    <property type="component" value="Plasmid pO157"/>
</dbReference>
<dbReference type="Proteomes" id="UP000002519">
    <property type="component" value="Plasmid pO157"/>
</dbReference>
<dbReference type="GO" id="GO:0005829">
    <property type="term" value="C:cytosol"/>
    <property type="evidence" value="ECO:0007669"/>
    <property type="project" value="TreeGrafter"/>
</dbReference>
<dbReference type="GO" id="GO:0042597">
    <property type="term" value="C:periplasmic space"/>
    <property type="evidence" value="ECO:0007669"/>
    <property type="project" value="UniProtKB-SubCell"/>
</dbReference>
<dbReference type="GO" id="GO:0004096">
    <property type="term" value="F:catalase activity"/>
    <property type="evidence" value="ECO:0007669"/>
    <property type="project" value="UniProtKB-UniRule"/>
</dbReference>
<dbReference type="GO" id="GO:0020037">
    <property type="term" value="F:heme binding"/>
    <property type="evidence" value="ECO:0007669"/>
    <property type="project" value="InterPro"/>
</dbReference>
<dbReference type="GO" id="GO:0046872">
    <property type="term" value="F:metal ion binding"/>
    <property type="evidence" value="ECO:0007669"/>
    <property type="project" value="UniProtKB-KW"/>
</dbReference>
<dbReference type="GO" id="GO:0070301">
    <property type="term" value="P:cellular response to hydrogen peroxide"/>
    <property type="evidence" value="ECO:0007669"/>
    <property type="project" value="TreeGrafter"/>
</dbReference>
<dbReference type="GO" id="GO:0042744">
    <property type="term" value="P:hydrogen peroxide catabolic process"/>
    <property type="evidence" value="ECO:0007669"/>
    <property type="project" value="UniProtKB-KW"/>
</dbReference>
<dbReference type="CDD" id="cd00649">
    <property type="entry name" value="catalase_peroxidase_1"/>
    <property type="match status" value="1"/>
</dbReference>
<dbReference type="CDD" id="cd08200">
    <property type="entry name" value="catalase_peroxidase_2"/>
    <property type="match status" value="1"/>
</dbReference>
<dbReference type="FunFam" id="1.10.420.10:FF:000004">
    <property type="entry name" value="Catalase-peroxidase"/>
    <property type="match status" value="1"/>
</dbReference>
<dbReference type="FunFam" id="1.10.520.10:FF:000002">
    <property type="entry name" value="Catalase-peroxidase"/>
    <property type="match status" value="1"/>
</dbReference>
<dbReference type="Gene3D" id="1.10.520.10">
    <property type="match status" value="2"/>
</dbReference>
<dbReference type="Gene3D" id="1.10.420.10">
    <property type="entry name" value="Peroxidase, domain 2"/>
    <property type="match status" value="2"/>
</dbReference>
<dbReference type="HAMAP" id="MF_01961">
    <property type="entry name" value="Catal_peroxid"/>
    <property type="match status" value="1"/>
</dbReference>
<dbReference type="InterPro" id="IPR000763">
    <property type="entry name" value="Catalase_peroxidase"/>
</dbReference>
<dbReference type="InterPro" id="IPR002016">
    <property type="entry name" value="Haem_peroxidase"/>
</dbReference>
<dbReference type="InterPro" id="IPR010255">
    <property type="entry name" value="Haem_peroxidase_sf"/>
</dbReference>
<dbReference type="InterPro" id="IPR019794">
    <property type="entry name" value="Peroxidases_AS"/>
</dbReference>
<dbReference type="InterPro" id="IPR019793">
    <property type="entry name" value="Peroxidases_heam-ligand_BS"/>
</dbReference>
<dbReference type="NCBIfam" id="TIGR00198">
    <property type="entry name" value="cat_per_HPI"/>
    <property type="match status" value="1"/>
</dbReference>
<dbReference type="NCBIfam" id="NF011635">
    <property type="entry name" value="PRK15061.1"/>
    <property type="match status" value="1"/>
</dbReference>
<dbReference type="PANTHER" id="PTHR30555:SF0">
    <property type="entry name" value="CATALASE-PEROXIDASE"/>
    <property type="match status" value="1"/>
</dbReference>
<dbReference type="PANTHER" id="PTHR30555">
    <property type="entry name" value="HYDROPEROXIDASE I, BIFUNCTIONAL CATALASE-PEROXIDASE"/>
    <property type="match status" value="1"/>
</dbReference>
<dbReference type="Pfam" id="PF00141">
    <property type="entry name" value="peroxidase"/>
    <property type="match status" value="2"/>
</dbReference>
<dbReference type="PRINTS" id="PR00460">
    <property type="entry name" value="BPEROXIDASE"/>
</dbReference>
<dbReference type="PRINTS" id="PR00458">
    <property type="entry name" value="PEROXIDASE"/>
</dbReference>
<dbReference type="SUPFAM" id="SSF48113">
    <property type="entry name" value="Heme-dependent peroxidases"/>
    <property type="match status" value="2"/>
</dbReference>
<dbReference type="PROSITE" id="PS00435">
    <property type="entry name" value="PEROXIDASE_1"/>
    <property type="match status" value="1"/>
</dbReference>
<dbReference type="PROSITE" id="PS00436">
    <property type="entry name" value="PEROXIDASE_2"/>
    <property type="match status" value="1"/>
</dbReference>
<dbReference type="PROSITE" id="PS50873">
    <property type="entry name" value="PEROXIDASE_4"/>
    <property type="match status" value="1"/>
</dbReference>
<feature type="signal peptide" evidence="1">
    <location>
        <begin position="1"/>
        <end position="23"/>
    </location>
</feature>
<feature type="chain" id="PRO_0000354782" description="Catalase-peroxidase 2">
    <location>
        <begin position="24"/>
        <end position="736"/>
    </location>
</feature>
<feature type="active site" description="Proton acceptor" evidence="1">
    <location>
        <position position="103"/>
    </location>
</feature>
<feature type="binding site" description="axial binding residue" evidence="1">
    <location>
        <position position="264"/>
    </location>
    <ligand>
        <name>heme b</name>
        <dbReference type="ChEBI" id="CHEBI:60344"/>
    </ligand>
    <ligandPart>
        <name>Fe</name>
        <dbReference type="ChEBI" id="CHEBI:18248"/>
    </ligandPart>
</feature>
<feature type="site" description="Transition state stabilizer" evidence="1">
    <location>
        <position position="99"/>
    </location>
</feature>
<feature type="cross-link" description="Tryptophyl-tyrosyl-methioninium (Trp-Tyr) (with M-249)" evidence="1">
    <location>
        <begin position="102"/>
        <end position="223"/>
    </location>
</feature>
<feature type="cross-link" description="Tryptophyl-tyrosyl-methioninium (Tyr-Met) (with W-102)" evidence="1">
    <location>
        <begin position="223"/>
        <end position="249"/>
    </location>
</feature>
<reference key="1">
    <citation type="journal article" date="1996" name="Microbiology">
        <title>KatP, a novel catalase-peroxidase encoded by the large plasmid of enterohaemorrhagic Escherichia coli O157:H7.</title>
        <authorList>
            <person name="Brunder W."/>
            <person name="Schmidt H."/>
            <person name="Karch H."/>
        </authorList>
    </citation>
    <scope>NUCLEOTIDE SEQUENCE [GENOMIC DNA]</scope>
    <scope>FUNCTION</scope>
    <scope>SUBCELLULAR LOCATION</scope>
    <source>
        <strain>O157:H7 / EDL933 / ATCC 700927 / EHEC</strain>
        <plasmid>pO157</plasmid>
    </source>
</reference>
<reference key="2">
    <citation type="journal article" date="1998" name="Nucleic Acids Res.">
        <title>The complete DNA sequence and analysis of the large virulence plasmid of Escherichia coli O157:H7.</title>
        <authorList>
            <person name="Burland V."/>
            <person name="Shao Y."/>
            <person name="Perna N.T."/>
            <person name="Plunkett G. III"/>
            <person name="Sofia H.J."/>
            <person name="Blattner F.R."/>
        </authorList>
    </citation>
    <scope>NUCLEOTIDE SEQUENCE [LARGE SCALE GENOMIC DNA]</scope>
    <source>
        <strain>O157:H7 / EDL933 / ATCC 700927 / EHEC</strain>
        <plasmid>pO157</plasmid>
    </source>
</reference>
<reference key="3">
    <citation type="journal article" date="1998" name="DNA Res.">
        <title>Complete nucleotide sequences of 93-kb and 3.3-kb plasmids of an enterohemorrhagic Escherichia coli O157:H7 derived from Sakai outbreak.</title>
        <authorList>
            <person name="Makino K."/>
            <person name="Ishii K."/>
            <person name="Yasunaga T."/>
            <person name="Hattori M."/>
            <person name="Yokoyama K."/>
            <person name="Yatsudo H.C."/>
            <person name="Kubota Y."/>
            <person name="Yamaichi Y."/>
            <person name="Iida T."/>
            <person name="Yamamoto K."/>
            <person name="Honda T."/>
            <person name="Han C.G."/>
            <person name="Ohtsubo A."/>
            <person name="Kasamatsu M."/>
            <person name="Hayashi T."/>
            <person name="Kuhara S."/>
            <person name="Shinagawa H."/>
        </authorList>
    </citation>
    <scope>NUCLEOTIDE SEQUENCE [LARGE SCALE GENOMIC DNA]</scope>
    <source>
        <strain>O157:H7 / Sakai / RIMD 0509952 / EHEC</strain>
        <plasmid>pO157</plasmid>
    </source>
</reference>
<evidence type="ECO:0000255" key="1">
    <source>
        <dbReference type="HAMAP-Rule" id="MF_01961"/>
    </source>
</evidence>
<evidence type="ECO:0000269" key="2">
    <source>
    </source>
</evidence>
<sequence length="736" mass="81794">MIKKTLPVLILLALSGSFSTAVAADKKETQNFYYPETLDLTPLRLHSPESNPWGADFDYATRFQQLDMEALKKDIKDLLTTSQDWWPADYGHYGPFFIRMAWHGAGTYRTYDGRGGASGGQQRFEPLNSWPDNVNLDKARRLLWPVKKKYGSSISWGDLMVLTGNVALESMGFKTLGFAGGREDDWESDLVYWGPDNKPLADNRDKNGKLQKPLAATQMGLIYVNPEGPGGKPDPLASAKDIREAFSRMAMDDEETVALIAGGHTFGKAHGAASPEKCIGAGPDGAPVEEQGLGWKNKCGTGNGKYTITSGLEGAWSTSPTQFTMQYLKNLYKYEWELHKSPAGAYQWKPKKAANIVQDAHDPSVLHPLMMFTTDIALKVDPEYKKITTRFLNDPKAFEQAFARAWFKLTHRDMGPAARYLGNEVPAESFIWQDPLPAADYTMIDGKDIKSLKEQVMDLGIPASELIKTAWASASTFRVTDYRGGNNGARIRLQPEINWEVNEPEKLKKVLASLTSLQREFNKKQSDGKKVSLADLIVLSGNAAIEDAARKAGVELEIPFTPGRTDASQEQTDVASFSVLEPTADGFRNYYSKSRSHISPVESLIDKASQLDLTVPEMTALLGGLRVMDINTNNSSLGVFTDTPGVLDNKFFVNLLDMSTRWSKADKEDTYNGFDRKTGALKWKASSVDLIFSSNPELRAVAEVYASDDARNKFIHDFVKSWNKVMNSDRFDLNNK</sequence>
<geneLocation type="plasmid">
    <name>pO157</name>
</geneLocation>
<accession>Q7BSW8</accession>
<accession>P77038</accession>
<proteinExistence type="inferred from homology"/>
<gene>
    <name evidence="1" type="primary">katG2</name>
    <name type="synonym">katP</name>
    <name type="ordered locus">L7017</name>
    <name type="ordered locus">ECO57PM75</name>
</gene>
<protein>
    <recommendedName>
        <fullName evidence="1">Catalase-peroxidase 2</fullName>
        <shortName evidence="1">CP 2</shortName>
        <ecNumber evidence="1">1.11.1.21</ecNumber>
    </recommendedName>
    <alternativeName>
        <fullName evidence="1">Peroxidase/catalase 2</fullName>
    </alternativeName>
</protein>
<organism>
    <name type="scientific">Escherichia coli O157:H7</name>
    <dbReference type="NCBI Taxonomy" id="83334"/>
    <lineage>
        <taxon>Bacteria</taxon>
        <taxon>Pseudomonadati</taxon>
        <taxon>Pseudomonadota</taxon>
        <taxon>Gammaproteobacteria</taxon>
        <taxon>Enterobacterales</taxon>
        <taxon>Enterobacteriaceae</taxon>
        <taxon>Escherichia</taxon>
    </lineage>
</organism>